<gene>
    <name evidence="1" type="primary">folD</name>
    <name type="ordered locus">AM179</name>
</gene>
<organism>
    <name type="scientific">Anaplasma marginale (strain St. Maries)</name>
    <dbReference type="NCBI Taxonomy" id="234826"/>
    <lineage>
        <taxon>Bacteria</taxon>
        <taxon>Pseudomonadati</taxon>
        <taxon>Pseudomonadota</taxon>
        <taxon>Alphaproteobacteria</taxon>
        <taxon>Rickettsiales</taxon>
        <taxon>Anaplasmataceae</taxon>
        <taxon>Anaplasma</taxon>
    </lineage>
</organism>
<accession>Q5PBL6</accession>
<dbReference type="EC" id="1.5.1.5" evidence="1"/>
<dbReference type="EC" id="3.5.4.9" evidence="1"/>
<dbReference type="EMBL" id="CP000030">
    <property type="protein sequence ID" value="AAV86313.1"/>
    <property type="molecule type" value="Genomic_DNA"/>
</dbReference>
<dbReference type="RefSeq" id="WP_010262876.1">
    <property type="nucleotide sequence ID" value="NZ_AFMU01000019.1"/>
</dbReference>
<dbReference type="SMR" id="Q5PBL6"/>
<dbReference type="KEGG" id="ama:AM179"/>
<dbReference type="HOGENOM" id="CLU_034045_2_1_5"/>
<dbReference type="UniPathway" id="UPA00193"/>
<dbReference type="GO" id="GO:0005829">
    <property type="term" value="C:cytosol"/>
    <property type="evidence" value="ECO:0007669"/>
    <property type="project" value="TreeGrafter"/>
</dbReference>
<dbReference type="GO" id="GO:0004477">
    <property type="term" value="F:methenyltetrahydrofolate cyclohydrolase activity"/>
    <property type="evidence" value="ECO:0007669"/>
    <property type="project" value="UniProtKB-UniRule"/>
</dbReference>
<dbReference type="GO" id="GO:0004488">
    <property type="term" value="F:methylenetetrahydrofolate dehydrogenase (NADP+) activity"/>
    <property type="evidence" value="ECO:0007669"/>
    <property type="project" value="UniProtKB-UniRule"/>
</dbReference>
<dbReference type="GO" id="GO:0000105">
    <property type="term" value="P:L-histidine biosynthetic process"/>
    <property type="evidence" value="ECO:0007669"/>
    <property type="project" value="UniProtKB-KW"/>
</dbReference>
<dbReference type="GO" id="GO:0009086">
    <property type="term" value="P:methionine biosynthetic process"/>
    <property type="evidence" value="ECO:0007669"/>
    <property type="project" value="UniProtKB-KW"/>
</dbReference>
<dbReference type="GO" id="GO:0006164">
    <property type="term" value="P:purine nucleotide biosynthetic process"/>
    <property type="evidence" value="ECO:0007669"/>
    <property type="project" value="UniProtKB-KW"/>
</dbReference>
<dbReference type="GO" id="GO:0035999">
    <property type="term" value="P:tetrahydrofolate interconversion"/>
    <property type="evidence" value="ECO:0007669"/>
    <property type="project" value="UniProtKB-UniRule"/>
</dbReference>
<dbReference type="CDD" id="cd01080">
    <property type="entry name" value="NAD_bind_m-THF_DH_Cyclohyd"/>
    <property type="match status" value="1"/>
</dbReference>
<dbReference type="FunFam" id="3.40.50.720:FF:000006">
    <property type="entry name" value="Bifunctional protein FolD"/>
    <property type="match status" value="1"/>
</dbReference>
<dbReference type="FunFam" id="3.40.50.10860:FF:000005">
    <property type="entry name" value="C-1-tetrahydrofolate synthase, cytoplasmic, putative"/>
    <property type="match status" value="1"/>
</dbReference>
<dbReference type="Gene3D" id="3.40.50.10860">
    <property type="entry name" value="Leucine Dehydrogenase, chain A, domain 1"/>
    <property type="match status" value="1"/>
</dbReference>
<dbReference type="Gene3D" id="3.40.50.720">
    <property type="entry name" value="NAD(P)-binding Rossmann-like Domain"/>
    <property type="match status" value="1"/>
</dbReference>
<dbReference type="HAMAP" id="MF_01576">
    <property type="entry name" value="THF_DHG_CYH"/>
    <property type="match status" value="1"/>
</dbReference>
<dbReference type="InterPro" id="IPR046346">
    <property type="entry name" value="Aminoacid_DH-like_N_sf"/>
</dbReference>
<dbReference type="InterPro" id="IPR036291">
    <property type="entry name" value="NAD(P)-bd_dom_sf"/>
</dbReference>
<dbReference type="InterPro" id="IPR000672">
    <property type="entry name" value="THF_DH/CycHdrlase"/>
</dbReference>
<dbReference type="InterPro" id="IPR020630">
    <property type="entry name" value="THF_DH/CycHdrlase_cat_dom"/>
</dbReference>
<dbReference type="InterPro" id="IPR020867">
    <property type="entry name" value="THF_DH/CycHdrlase_CS"/>
</dbReference>
<dbReference type="InterPro" id="IPR020631">
    <property type="entry name" value="THF_DH/CycHdrlase_NAD-bd_dom"/>
</dbReference>
<dbReference type="NCBIfam" id="NF010785">
    <property type="entry name" value="PRK14188.1"/>
    <property type="match status" value="1"/>
</dbReference>
<dbReference type="PANTHER" id="PTHR48099:SF5">
    <property type="entry name" value="C-1-TETRAHYDROFOLATE SYNTHASE, CYTOPLASMIC"/>
    <property type="match status" value="1"/>
</dbReference>
<dbReference type="PANTHER" id="PTHR48099">
    <property type="entry name" value="C-1-TETRAHYDROFOLATE SYNTHASE, CYTOPLASMIC-RELATED"/>
    <property type="match status" value="1"/>
</dbReference>
<dbReference type="Pfam" id="PF00763">
    <property type="entry name" value="THF_DHG_CYH"/>
    <property type="match status" value="1"/>
</dbReference>
<dbReference type="Pfam" id="PF02882">
    <property type="entry name" value="THF_DHG_CYH_C"/>
    <property type="match status" value="1"/>
</dbReference>
<dbReference type="PRINTS" id="PR00085">
    <property type="entry name" value="THFDHDRGNASE"/>
</dbReference>
<dbReference type="SUPFAM" id="SSF53223">
    <property type="entry name" value="Aminoacid dehydrogenase-like, N-terminal domain"/>
    <property type="match status" value="1"/>
</dbReference>
<dbReference type="SUPFAM" id="SSF51735">
    <property type="entry name" value="NAD(P)-binding Rossmann-fold domains"/>
    <property type="match status" value="1"/>
</dbReference>
<dbReference type="PROSITE" id="PS00766">
    <property type="entry name" value="THF_DHG_CYH_1"/>
    <property type="match status" value="1"/>
</dbReference>
<dbReference type="PROSITE" id="PS00767">
    <property type="entry name" value="THF_DHG_CYH_2"/>
    <property type="match status" value="1"/>
</dbReference>
<protein>
    <recommendedName>
        <fullName evidence="1">Bifunctional protein FolD</fullName>
    </recommendedName>
    <domain>
        <recommendedName>
            <fullName evidence="1">Methylenetetrahydrofolate dehydrogenase</fullName>
            <ecNumber evidence="1">1.5.1.5</ecNumber>
        </recommendedName>
    </domain>
    <domain>
        <recommendedName>
            <fullName evidence="1">Methenyltetrahydrofolate cyclohydrolase</fullName>
            <ecNumber evidence="1">3.5.4.9</ecNumber>
        </recommendedName>
    </domain>
</protein>
<feature type="chain" id="PRO_0000268260" description="Bifunctional protein FolD">
    <location>
        <begin position="1"/>
        <end position="299"/>
    </location>
</feature>
<feature type="binding site" evidence="1">
    <location>
        <begin position="166"/>
        <end position="168"/>
    </location>
    <ligand>
        <name>NADP(+)</name>
        <dbReference type="ChEBI" id="CHEBI:58349"/>
    </ligand>
</feature>
<feature type="binding site" evidence="1">
    <location>
        <position position="191"/>
    </location>
    <ligand>
        <name>NADP(+)</name>
        <dbReference type="ChEBI" id="CHEBI:58349"/>
    </ligand>
</feature>
<feature type="binding site" evidence="1">
    <location>
        <position position="232"/>
    </location>
    <ligand>
        <name>NADP(+)</name>
        <dbReference type="ChEBI" id="CHEBI:58349"/>
    </ligand>
</feature>
<sequence>MREIIDGKLVARGLLDRLRVSVDRLKAEHGIVPHLVVVIVGDDPASKLYVGNKQRKAEELGLQSRTIALEHDTSQEELLRIIDELNRDAAVHGILVQLPLPRHIDKELVINAISPEKDVDGFHNANAGKLATGQLDCMIPCTPQGCIHLIKTVKQDLAGSNAVVVGRSNIVGKPVALLLLYENCTVTVLHSASRNLEEHCLRADIIVAAVGKARFIRASWIKPGAIVVDVGINLVEESGKKRFVGDVEFEGLQDVPCSVTPVPGGVGPMTIAFLLVNTVLGSCKQCGVSYEDIKSSLLQ</sequence>
<evidence type="ECO:0000255" key="1">
    <source>
        <dbReference type="HAMAP-Rule" id="MF_01576"/>
    </source>
</evidence>
<proteinExistence type="inferred from homology"/>
<keyword id="KW-0028">Amino-acid biosynthesis</keyword>
<keyword id="KW-0368">Histidine biosynthesis</keyword>
<keyword id="KW-0378">Hydrolase</keyword>
<keyword id="KW-0486">Methionine biosynthesis</keyword>
<keyword id="KW-0511">Multifunctional enzyme</keyword>
<keyword id="KW-0521">NADP</keyword>
<keyword id="KW-0554">One-carbon metabolism</keyword>
<keyword id="KW-0560">Oxidoreductase</keyword>
<keyword id="KW-0658">Purine biosynthesis</keyword>
<name>FOLD_ANAMM</name>
<comment type="function">
    <text evidence="1">Catalyzes the oxidation of 5,10-methylenetetrahydrofolate to 5,10-methenyltetrahydrofolate and then the hydrolysis of 5,10-methenyltetrahydrofolate to 10-formyltetrahydrofolate.</text>
</comment>
<comment type="catalytic activity">
    <reaction evidence="1">
        <text>(6R)-5,10-methylene-5,6,7,8-tetrahydrofolate + NADP(+) = (6R)-5,10-methenyltetrahydrofolate + NADPH</text>
        <dbReference type="Rhea" id="RHEA:22812"/>
        <dbReference type="ChEBI" id="CHEBI:15636"/>
        <dbReference type="ChEBI" id="CHEBI:57455"/>
        <dbReference type="ChEBI" id="CHEBI:57783"/>
        <dbReference type="ChEBI" id="CHEBI:58349"/>
        <dbReference type="EC" id="1.5.1.5"/>
    </reaction>
</comment>
<comment type="catalytic activity">
    <reaction evidence="1">
        <text>(6R)-5,10-methenyltetrahydrofolate + H2O = (6R)-10-formyltetrahydrofolate + H(+)</text>
        <dbReference type="Rhea" id="RHEA:23700"/>
        <dbReference type="ChEBI" id="CHEBI:15377"/>
        <dbReference type="ChEBI" id="CHEBI:15378"/>
        <dbReference type="ChEBI" id="CHEBI:57455"/>
        <dbReference type="ChEBI" id="CHEBI:195366"/>
        <dbReference type="EC" id="3.5.4.9"/>
    </reaction>
</comment>
<comment type="pathway">
    <text evidence="1">One-carbon metabolism; tetrahydrofolate interconversion.</text>
</comment>
<comment type="subunit">
    <text evidence="1">Homodimer.</text>
</comment>
<comment type="similarity">
    <text evidence="1">Belongs to the tetrahydrofolate dehydrogenase/cyclohydrolase family.</text>
</comment>
<reference key="1">
    <citation type="journal article" date="2005" name="Proc. Natl. Acad. Sci. U.S.A.">
        <title>Complete genome sequencing of Anaplasma marginale reveals that the surface is skewed to two superfamilies of outer membrane proteins.</title>
        <authorList>
            <person name="Brayton K.A."/>
            <person name="Kappmeyer L.S."/>
            <person name="Herndon D.R."/>
            <person name="Dark M.J."/>
            <person name="Tibbals D.L."/>
            <person name="Palmer G.H."/>
            <person name="McGuire T.C."/>
            <person name="Knowles D.P. Jr."/>
        </authorList>
    </citation>
    <scope>NUCLEOTIDE SEQUENCE [LARGE SCALE GENOMIC DNA]</scope>
    <source>
        <strain>St. Maries</strain>
    </source>
</reference>